<protein>
    <recommendedName>
        <fullName evidence="1">Small ribosomal subunit protein uS9</fullName>
    </recommendedName>
    <alternativeName>
        <fullName evidence="3">30S ribosomal protein S9</fullName>
    </alternativeName>
</protein>
<proteinExistence type="inferred from homology"/>
<feature type="chain" id="PRO_1000128181" description="Small ribosomal subunit protein uS9">
    <location>
        <begin position="1"/>
        <end position="130"/>
    </location>
</feature>
<feature type="region of interest" description="Disordered" evidence="2">
    <location>
        <begin position="106"/>
        <end position="130"/>
    </location>
</feature>
<feature type="compositionally biased region" description="Basic residues" evidence="2">
    <location>
        <begin position="111"/>
        <end position="130"/>
    </location>
</feature>
<reference key="1">
    <citation type="journal article" date="2001" name="Microb. Drug Resist.">
        <title>Annotated draft genomic sequence from a Streptococcus pneumoniae type 19F clinical isolate.</title>
        <authorList>
            <person name="Dopazo J."/>
            <person name="Mendoza A."/>
            <person name="Herrero J."/>
            <person name="Caldara F."/>
            <person name="Humbert Y."/>
            <person name="Friedli L."/>
            <person name="Guerrier M."/>
            <person name="Grand-Schenk E."/>
            <person name="Gandin C."/>
            <person name="de Francesco M."/>
            <person name="Polissi A."/>
            <person name="Buell G."/>
            <person name="Feger G."/>
            <person name="Garcia E."/>
            <person name="Peitsch M."/>
            <person name="Garcia-Bustos J.F."/>
        </authorList>
    </citation>
    <scope>NUCLEOTIDE SEQUENCE [LARGE SCALE GENOMIC DNA]</scope>
    <source>
        <strain>G54</strain>
    </source>
</reference>
<reference key="2">
    <citation type="submission" date="2008-03" db="EMBL/GenBank/DDBJ databases">
        <title>Pneumococcal beta glucoside metabolism investigated by whole genome comparison.</title>
        <authorList>
            <person name="Mulas L."/>
            <person name="Trappetti C."/>
            <person name="Hakenbeck R."/>
            <person name="Iannelli F."/>
            <person name="Pozzi G."/>
            <person name="Davidsen T.M."/>
            <person name="Tettelin H."/>
            <person name="Oggioni M."/>
        </authorList>
    </citation>
    <scope>NUCLEOTIDE SEQUENCE [LARGE SCALE GENOMIC DNA]</scope>
    <source>
        <strain>G54</strain>
    </source>
</reference>
<comment type="similarity">
    <text evidence="1">Belongs to the universal ribosomal protein uS9 family.</text>
</comment>
<sequence length="130" mass="14234">MSQAQYAGTGRRKNAVARVRLVPGTGKITVNKKDVEEYIPHADLRLVINQPFAVTSTVGSYDVFVNVVGGGYAGQSGAIRHGIARALLQVDPDFRDSLKRAGLLTRDSRKVERKKPGLKKARKASQFSKR</sequence>
<dbReference type="EMBL" id="CP001015">
    <property type="protein sequence ID" value="ACF55455.1"/>
    <property type="molecule type" value="Genomic_DNA"/>
</dbReference>
<dbReference type="SMR" id="B5E6W9"/>
<dbReference type="KEGG" id="spx:SPG_0280"/>
<dbReference type="HOGENOM" id="CLU_046483_2_1_9"/>
<dbReference type="GO" id="GO:0022627">
    <property type="term" value="C:cytosolic small ribosomal subunit"/>
    <property type="evidence" value="ECO:0007669"/>
    <property type="project" value="TreeGrafter"/>
</dbReference>
<dbReference type="GO" id="GO:0003723">
    <property type="term" value="F:RNA binding"/>
    <property type="evidence" value="ECO:0007669"/>
    <property type="project" value="TreeGrafter"/>
</dbReference>
<dbReference type="GO" id="GO:0003735">
    <property type="term" value="F:structural constituent of ribosome"/>
    <property type="evidence" value="ECO:0007669"/>
    <property type="project" value="InterPro"/>
</dbReference>
<dbReference type="GO" id="GO:0006412">
    <property type="term" value="P:translation"/>
    <property type="evidence" value="ECO:0007669"/>
    <property type="project" value="UniProtKB-UniRule"/>
</dbReference>
<dbReference type="FunFam" id="3.30.230.10:FF:000001">
    <property type="entry name" value="30S ribosomal protein S9"/>
    <property type="match status" value="1"/>
</dbReference>
<dbReference type="Gene3D" id="3.30.230.10">
    <property type="match status" value="1"/>
</dbReference>
<dbReference type="HAMAP" id="MF_00532_B">
    <property type="entry name" value="Ribosomal_uS9_B"/>
    <property type="match status" value="1"/>
</dbReference>
<dbReference type="InterPro" id="IPR020568">
    <property type="entry name" value="Ribosomal_Su5_D2-typ_SF"/>
</dbReference>
<dbReference type="InterPro" id="IPR000754">
    <property type="entry name" value="Ribosomal_uS9"/>
</dbReference>
<dbReference type="InterPro" id="IPR023035">
    <property type="entry name" value="Ribosomal_uS9_bac/plastid"/>
</dbReference>
<dbReference type="InterPro" id="IPR020574">
    <property type="entry name" value="Ribosomal_uS9_CS"/>
</dbReference>
<dbReference type="InterPro" id="IPR014721">
    <property type="entry name" value="Ribsml_uS5_D2-typ_fold_subgr"/>
</dbReference>
<dbReference type="NCBIfam" id="NF001099">
    <property type="entry name" value="PRK00132.1"/>
    <property type="match status" value="1"/>
</dbReference>
<dbReference type="PANTHER" id="PTHR21569">
    <property type="entry name" value="RIBOSOMAL PROTEIN S9"/>
    <property type="match status" value="1"/>
</dbReference>
<dbReference type="PANTHER" id="PTHR21569:SF1">
    <property type="entry name" value="SMALL RIBOSOMAL SUBUNIT PROTEIN US9M"/>
    <property type="match status" value="1"/>
</dbReference>
<dbReference type="Pfam" id="PF00380">
    <property type="entry name" value="Ribosomal_S9"/>
    <property type="match status" value="1"/>
</dbReference>
<dbReference type="SUPFAM" id="SSF54211">
    <property type="entry name" value="Ribosomal protein S5 domain 2-like"/>
    <property type="match status" value="1"/>
</dbReference>
<dbReference type="PROSITE" id="PS00360">
    <property type="entry name" value="RIBOSOMAL_S9"/>
    <property type="match status" value="1"/>
</dbReference>
<organism>
    <name type="scientific">Streptococcus pneumoniae serotype 19F (strain G54)</name>
    <dbReference type="NCBI Taxonomy" id="512566"/>
    <lineage>
        <taxon>Bacteria</taxon>
        <taxon>Bacillati</taxon>
        <taxon>Bacillota</taxon>
        <taxon>Bacilli</taxon>
        <taxon>Lactobacillales</taxon>
        <taxon>Streptococcaceae</taxon>
        <taxon>Streptococcus</taxon>
    </lineage>
</organism>
<name>RS9_STRP4</name>
<gene>
    <name evidence="1" type="primary">rpsI</name>
    <name type="ordered locus">SPG_0280</name>
</gene>
<keyword id="KW-0687">Ribonucleoprotein</keyword>
<keyword id="KW-0689">Ribosomal protein</keyword>
<evidence type="ECO:0000255" key="1">
    <source>
        <dbReference type="HAMAP-Rule" id="MF_00532"/>
    </source>
</evidence>
<evidence type="ECO:0000256" key="2">
    <source>
        <dbReference type="SAM" id="MobiDB-lite"/>
    </source>
</evidence>
<evidence type="ECO:0000305" key="3"/>
<accession>B5E6W9</accession>